<protein>
    <recommendedName>
        <fullName evidence="1">Small ribosomal subunit protein bS16</fullName>
    </recommendedName>
    <alternativeName>
        <fullName evidence="2">30S ribosomal protein S16</fullName>
    </alternativeName>
</protein>
<sequence>MAIKMRLQRFGVHKRPFYRVVASESKNARDGKFLEILGTYDTILDIVELDHNKVQKWLSNGAQPTKTVKKVFKKSKFVAKTNTKVEK</sequence>
<name>RS16_ONYPE</name>
<proteinExistence type="inferred from homology"/>
<evidence type="ECO:0000255" key="1">
    <source>
        <dbReference type="HAMAP-Rule" id="MF_00385"/>
    </source>
</evidence>
<evidence type="ECO:0000305" key="2"/>
<accession>P62235</accession>
<gene>
    <name evidence="1" type="primary">rpsP</name>
    <name type="ordered locus">PAM_472</name>
</gene>
<organism>
    <name type="scientific">Onion yellows phytoplasma (strain OY-M)</name>
    <dbReference type="NCBI Taxonomy" id="262768"/>
    <lineage>
        <taxon>Bacteria</taxon>
        <taxon>Bacillati</taxon>
        <taxon>Mycoplasmatota</taxon>
        <taxon>Mollicutes</taxon>
        <taxon>Acholeplasmatales</taxon>
        <taxon>Acholeplasmataceae</taxon>
        <taxon>Candidatus Phytoplasma</taxon>
        <taxon>16SrI (Aster yellows group)</taxon>
    </lineage>
</organism>
<keyword id="KW-0687">Ribonucleoprotein</keyword>
<keyword id="KW-0689">Ribosomal protein</keyword>
<reference key="1">
    <citation type="journal article" date="2004" name="Nat. Genet.">
        <title>Reductive evolution suggested from the complete genome sequence of a plant-pathogenic phytoplasma.</title>
        <authorList>
            <person name="Oshima K."/>
            <person name="Kakizawa S."/>
            <person name="Nishigawa H."/>
            <person name="Jung H.-Y."/>
            <person name="Wei W."/>
            <person name="Suzuki S."/>
            <person name="Arashida R."/>
            <person name="Nakata D."/>
            <person name="Miyata S."/>
            <person name="Ugaki M."/>
            <person name="Namba S."/>
        </authorList>
    </citation>
    <scope>NUCLEOTIDE SEQUENCE [LARGE SCALE GENOMIC DNA]</scope>
    <source>
        <strain>OY-M</strain>
    </source>
</reference>
<feature type="chain" id="PRO_0000167219" description="Small ribosomal subunit protein bS16">
    <location>
        <begin position="1"/>
        <end position="87"/>
    </location>
</feature>
<comment type="similarity">
    <text evidence="1">Belongs to the bacterial ribosomal protein bS16 family.</text>
</comment>
<dbReference type="EMBL" id="AP006628">
    <property type="protein sequence ID" value="BAD04557.1"/>
    <property type="molecule type" value="Genomic_DNA"/>
</dbReference>
<dbReference type="SMR" id="P62235"/>
<dbReference type="STRING" id="262768.PAM_472"/>
<dbReference type="KEGG" id="poy:PAM_472"/>
<dbReference type="eggNOG" id="COG0228">
    <property type="taxonomic scope" value="Bacteria"/>
</dbReference>
<dbReference type="HOGENOM" id="CLU_100590_5_2_14"/>
<dbReference type="BioCyc" id="OYEL262768:G1G26-557-MONOMER"/>
<dbReference type="Proteomes" id="UP000002523">
    <property type="component" value="Chromosome"/>
</dbReference>
<dbReference type="GO" id="GO:0005737">
    <property type="term" value="C:cytoplasm"/>
    <property type="evidence" value="ECO:0007669"/>
    <property type="project" value="UniProtKB-ARBA"/>
</dbReference>
<dbReference type="GO" id="GO:0015935">
    <property type="term" value="C:small ribosomal subunit"/>
    <property type="evidence" value="ECO:0007669"/>
    <property type="project" value="TreeGrafter"/>
</dbReference>
<dbReference type="GO" id="GO:0003735">
    <property type="term" value="F:structural constituent of ribosome"/>
    <property type="evidence" value="ECO:0007669"/>
    <property type="project" value="InterPro"/>
</dbReference>
<dbReference type="GO" id="GO:0006412">
    <property type="term" value="P:translation"/>
    <property type="evidence" value="ECO:0007669"/>
    <property type="project" value="UniProtKB-UniRule"/>
</dbReference>
<dbReference type="Gene3D" id="3.30.1320.10">
    <property type="match status" value="1"/>
</dbReference>
<dbReference type="HAMAP" id="MF_00385">
    <property type="entry name" value="Ribosomal_bS16"/>
    <property type="match status" value="1"/>
</dbReference>
<dbReference type="InterPro" id="IPR000307">
    <property type="entry name" value="Ribosomal_bS16"/>
</dbReference>
<dbReference type="InterPro" id="IPR023803">
    <property type="entry name" value="Ribosomal_bS16_dom_sf"/>
</dbReference>
<dbReference type="NCBIfam" id="TIGR00002">
    <property type="entry name" value="S16"/>
    <property type="match status" value="1"/>
</dbReference>
<dbReference type="PANTHER" id="PTHR12919">
    <property type="entry name" value="30S RIBOSOMAL PROTEIN S16"/>
    <property type="match status" value="1"/>
</dbReference>
<dbReference type="PANTHER" id="PTHR12919:SF20">
    <property type="entry name" value="SMALL RIBOSOMAL SUBUNIT PROTEIN BS16M"/>
    <property type="match status" value="1"/>
</dbReference>
<dbReference type="Pfam" id="PF00886">
    <property type="entry name" value="Ribosomal_S16"/>
    <property type="match status" value="1"/>
</dbReference>
<dbReference type="SUPFAM" id="SSF54565">
    <property type="entry name" value="Ribosomal protein S16"/>
    <property type="match status" value="1"/>
</dbReference>